<sequence length="370" mass="38890">MNPKPEADRKLSVVVAGGGTAGHIEPAMAVAEAVRAQRPDARITALGTTRGLETTLVPARGFDLQLIPPVPVPRKLNKDLATLPLRLRKALKETKRVLREVEADVVIGFGGYVSAPAYLAARSLKIPFFVHEANARAGVANKLGVKLGGTGLAAVEDSGLEAEIVGIPVRESVLQLDRKALRAEAREFFGVDPEAPLLLVTGGSQGARSINNAVVDAAKTLQDAGIGVLHAYGKKNDIELPAEVQEGKPRYVAVPYIERMDLALAAADAILCRSGAMTVAEVSAVGLPGIYVPLPHGNGEQELNVRPITHAGGGVIIKDAELTGHRVSQEVIPLLRDETRWQAASLATLAAGHRDAAEKIAEKIIAAADA</sequence>
<keyword id="KW-0131">Cell cycle</keyword>
<keyword id="KW-0132">Cell division</keyword>
<keyword id="KW-1003">Cell membrane</keyword>
<keyword id="KW-0133">Cell shape</keyword>
<keyword id="KW-0961">Cell wall biogenesis/degradation</keyword>
<keyword id="KW-0328">Glycosyltransferase</keyword>
<keyword id="KW-0472">Membrane</keyword>
<keyword id="KW-0573">Peptidoglycan synthesis</keyword>
<keyword id="KW-1185">Reference proteome</keyword>
<keyword id="KW-0808">Transferase</keyword>
<organism>
    <name type="scientific">Corynebacterium jeikeium (strain K411)</name>
    <dbReference type="NCBI Taxonomy" id="306537"/>
    <lineage>
        <taxon>Bacteria</taxon>
        <taxon>Bacillati</taxon>
        <taxon>Actinomycetota</taxon>
        <taxon>Actinomycetes</taxon>
        <taxon>Mycobacteriales</taxon>
        <taxon>Corynebacteriaceae</taxon>
        <taxon>Corynebacterium</taxon>
    </lineage>
</organism>
<proteinExistence type="inferred from homology"/>
<feature type="chain" id="PRO_0000225048" description="UDP-N-acetylglucosamine--N-acetylmuramyl-(pentapeptide) pyrophosphoryl-undecaprenol N-acetylglucosamine transferase">
    <location>
        <begin position="1"/>
        <end position="370"/>
    </location>
</feature>
<feature type="binding site" evidence="1">
    <location>
        <begin position="20"/>
        <end position="22"/>
    </location>
    <ligand>
        <name>UDP-N-acetyl-alpha-D-glucosamine</name>
        <dbReference type="ChEBI" id="CHEBI:57705"/>
    </ligand>
</feature>
<feature type="binding site" evidence="1">
    <location>
        <position position="134"/>
    </location>
    <ligand>
        <name>UDP-N-acetyl-alpha-D-glucosamine</name>
        <dbReference type="ChEBI" id="CHEBI:57705"/>
    </ligand>
</feature>
<feature type="binding site" evidence="1">
    <location>
        <position position="170"/>
    </location>
    <ligand>
        <name>UDP-N-acetyl-alpha-D-glucosamine</name>
        <dbReference type="ChEBI" id="CHEBI:57705"/>
    </ligand>
</feature>
<feature type="binding site" evidence="1">
    <location>
        <position position="204"/>
    </location>
    <ligand>
        <name>UDP-N-acetyl-alpha-D-glucosamine</name>
        <dbReference type="ChEBI" id="CHEBI:57705"/>
    </ligand>
</feature>
<feature type="binding site" evidence="1">
    <location>
        <position position="257"/>
    </location>
    <ligand>
        <name>UDP-N-acetyl-alpha-D-glucosamine</name>
        <dbReference type="ChEBI" id="CHEBI:57705"/>
    </ligand>
</feature>
<feature type="binding site" evidence="1">
    <location>
        <position position="301"/>
    </location>
    <ligand>
        <name>UDP-N-acetyl-alpha-D-glucosamine</name>
        <dbReference type="ChEBI" id="CHEBI:57705"/>
    </ligand>
</feature>
<reference key="1">
    <citation type="journal article" date="2005" name="J. Bacteriol.">
        <title>Complete genome sequence and analysis of the multiresistant nosocomial pathogen Corynebacterium jeikeium K411, a lipid-requiring bacterium of the human skin flora.</title>
        <authorList>
            <person name="Tauch A."/>
            <person name="Kaiser O."/>
            <person name="Hain T."/>
            <person name="Goesmann A."/>
            <person name="Weisshaar B."/>
            <person name="Albersmeier A."/>
            <person name="Bekel T."/>
            <person name="Bischoff N."/>
            <person name="Brune I."/>
            <person name="Chakraborty T."/>
            <person name="Kalinowski J."/>
            <person name="Meyer F."/>
            <person name="Rupp O."/>
            <person name="Schneiker S."/>
            <person name="Viehoever P."/>
            <person name="Puehler A."/>
        </authorList>
    </citation>
    <scope>NUCLEOTIDE SEQUENCE [LARGE SCALE GENOMIC DNA]</scope>
    <source>
        <strain>K411</strain>
    </source>
</reference>
<comment type="function">
    <text evidence="1">Cell wall formation. Catalyzes the transfer of a GlcNAc subunit on undecaprenyl-pyrophosphoryl-MurNAc-pentapeptide (lipid intermediate I) to form undecaprenyl-pyrophosphoryl-MurNAc-(pentapeptide)GlcNAc (lipid intermediate II).</text>
</comment>
<comment type="catalytic activity">
    <reaction evidence="1">
        <text>di-trans,octa-cis-undecaprenyl diphospho-N-acetyl-alpha-D-muramoyl-L-alanyl-D-glutamyl-meso-2,6-diaminopimeloyl-D-alanyl-D-alanine + UDP-N-acetyl-alpha-D-glucosamine = di-trans,octa-cis-undecaprenyl diphospho-[N-acetyl-alpha-D-glucosaminyl-(1-&gt;4)]-N-acetyl-alpha-D-muramoyl-L-alanyl-D-glutamyl-meso-2,6-diaminopimeloyl-D-alanyl-D-alanine + UDP + H(+)</text>
        <dbReference type="Rhea" id="RHEA:31227"/>
        <dbReference type="ChEBI" id="CHEBI:15378"/>
        <dbReference type="ChEBI" id="CHEBI:57705"/>
        <dbReference type="ChEBI" id="CHEBI:58223"/>
        <dbReference type="ChEBI" id="CHEBI:61387"/>
        <dbReference type="ChEBI" id="CHEBI:61388"/>
        <dbReference type="EC" id="2.4.1.227"/>
    </reaction>
</comment>
<comment type="pathway">
    <text evidence="1">Cell wall biogenesis; peptidoglycan biosynthesis.</text>
</comment>
<comment type="subcellular location">
    <subcellularLocation>
        <location evidence="1">Cell membrane</location>
        <topology evidence="1">Peripheral membrane protein</topology>
        <orientation evidence="1">Cytoplasmic side</orientation>
    </subcellularLocation>
</comment>
<comment type="similarity">
    <text evidence="1">Belongs to the glycosyltransferase 28 family. MurG subfamily.</text>
</comment>
<dbReference type="EC" id="2.4.1.227" evidence="1"/>
<dbReference type="EMBL" id="CR931997">
    <property type="protein sequence ID" value="CAI36912.1"/>
    <property type="molecule type" value="Genomic_DNA"/>
</dbReference>
<dbReference type="RefSeq" id="WP_011273363.1">
    <property type="nucleotide sequence ID" value="NC_007164.1"/>
</dbReference>
<dbReference type="SMR" id="Q4JW95"/>
<dbReference type="STRING" id="306537.jk0750"/>
<dbReference type="CAZy" id="GT28">
    <property type="family name" value="Glycosyltransferase Family 28"/>
</dbReference>
<dbReference type="KEGG" id="cjk:jk0750"/>
<dbReference type="PATRIC" id="fig|306537.10.peg.758"/>
<dbReference type="eggNOG" id="COG0707">
    <property type="taxonomic scope" value="Bacteria"/>
</dbReference>
<dbReference type="HOGENOM" id="CLU_037404_1_0_11"/>
<dbReference type="OrthoDB" id="9808936at2"/>
<dbReference type="UniPathway" id="UPA00219"/>
<dbReference type="Proteomes" id="UP000000545">
    <property type="component" value="Chromosome"/>
</dbReference>
<dbReference type="GO" id="GO:0005886">
    <property type="term" value="C:plasma membrane"/>
    <property type="evidence" value="ECO:0007669"/>
    <property type="project" value="UniProtKB-SubCell"/>
</dbReference>
<dbReference type="GO" id="GO:0051991">
    <property type="term" value="F:UDP-N-acetyl-D-glucosamine:N-acetylmuramoyl-L-alanyl-D-glutamyl-meso-2,6-diaminopimelyl-D-alanyl-D-alanine-diphosphoundecaprenol 4-beta-N-acetylglucosaminlytransferase activity"/>
    <property type="evidence" value="ECO:0007669"/>
    <property type="project" value="RHEA"/>
</dbReference>
<dbReference type="GO" id="GO:0050511">
    <property type="term" value="F:undecaprenyldiphospho-muramoylpentapeptide beta-N-acetylglucosaminyltransferase activity"/>
    <property type="evidence" value="ECO:0007669"/>
    <property type="project" value="UniProtKB-UniRule"/>
</dbReference>
<dbReference type="GO" id="GO:0005975">
    <property type="term" value="P:carbohydrate metabolic process"/>
    <property type="evidence" value="ECO:0007669"/>
    <property type="project" value="InterPro"/>
</dbReference>
<dbReference type="GO" id="GO:0051301">
    <property type="term" value="P:cell division"/>
    <property type="evidence" value="ECO:0007669"/>
    <property type="project" value="UniProtKB-KW"/>
</dbReference>
<dbReference type="GO" id="GO:0071555">
    <property type="term" value="P:cell wall organization"/>
    <property type="evidence" value="ECO:0007669"/>
    <property type="project" value="UniProtKB-KW"/>
</dbReference>
<dbReference type="GO" id="GO:0030259">
    <property type="term" value="P:lipid glycosylation"/>
    <property type="evidence" value="ECO:0007669"/>
    <property type="project" value="UniProtKB-UniRule"/>
</dbReference>
<dbReference type="GO" id="GO:0009252">
    <property type="term" value="P:peptidoglycan biosynthetic process"/>
    <property type="evidence" value="ECO:0007669"/>
    <property type="project" value="UniProtKB-UniRule"/>
</dbReference>
<dbReference type="GO" id="GO:0008360">
    <property type="term" value="P:regulation of cell shape"/>
    <property type="evidence" value="ECO:0007669"/>
    <property type="project" value="UniProtKB-KW"/>
</dbReference>
<dbReference type="CDD" id="cd03785">
    <property type="entry name" value="GT28_MurG"/>
    <property type="match status" value="1"/>
</dbReference>
<dbReference type="Gene3D" id="3.40.50.2000">
    <property type="entry name" value="Glycogen Phosphorylase B"/>
    <property type="match status" value="2"/>
</dbReference>
<dbReference type="HAMAP" id="MF_00033">
    <property type="entry name" value="MurG"/>
    <property type="match status" value="1"/>
</dbReference>
<dbReference type="InterPro" id="IPR006009">
    <property type="entry name" value="GlcNAc_MurG"/>
</dbReference>
<dbReference type="InterPro" id="IPR007235">
    <property type="entry name" value="Glyco_trans_28_C"/>
</dbReference>
<dbReference type="InterPro" id="IPR004276">
    <property type="entry name" value="GlycoTrans_28_N"/>
</dbReference>
<dbReference type="NCBIfam" id="TIGR01133">
    <property type="entry name" value="murG"/>
    <property type="match status" value="1"/>
</dbReference>
<dbReference type="PANTHER" id="PTHR21015:SF22">
    <property type="entry name" value="GLYCOSYLTRANSFERASE"/>
    <property type="match status" value="1"/>
</dbReference>
<dbReference type="PANTHER" id="PTHR21015">
    <property type="entry name" value="UDP-N-ACETYLGLUCOSAMINE--N-ACETYLMURAMYL-(PENTAPEPTIDE) PYROPHOSPHORYL-UNDECAPRENOL N-ACETYLGLUCOSAMINE TRANSFERASE 1"/>
    <property type="match status" value="1"/>
</dbReference>
<dbReference type="Pfam" id="PF04101">
    <property type="entry name" value="Glyco_tran_28_C"/>
    <property type="match status" value="1"/>
</dbReference>
<dbReference type="Pfam" id="PF03033">
    <property type="entry name" value="Glyco_transf_28"/>
    <property type="match status" value="1"/>
</dbReference>
<dbReference type="SUPFAM" id="SSF53756">
    <property type="entry name" value="UDP-Glycosyltransferase/glycogen phosphorylase"/>
    <property type="match status" value="1"/>
</dbReference>
<evidence type="ECO:0000255" key="1">
    <source>
        <dbReference type="HAMAP-Rule" id="MF_00033"/>
    </source>
</evidence>
<gene>
    <name evidence="1" type="primary">murG</name>
    <name type="ordered locus">jk0750</name>
</gene>
<name>MURG_CORJK</name>
<protein>
    <recommendedName>
        <fullName evidence="1">UDP-N-acetylglucosamine--N-acetylmuramyl-(pentapeptide) pyrophosphoryl-undecaprenol N-acetylglucosamine transferase</fullName>
        <ecNumber evidence="1">2.4.1.227</ecNumber>
    </recommendedName>
    <alternativeName>
        <fullName evidence="1">Undecaprenyl-PP-MurNAc-pentapeptide-UDPGlcNAc GlcNAc transferase</fullName>
    </alternativeName>
</protein>
<accession>Q4JW95</accession>